<reference key="1">
    <citation type="submission" date="2006-05" db="EMBL/GenBank/DDBJ databases">
        <title>Complete sequence of chromosome of Silicibacter sp. TM1040.</title>
        <authorList>
            <consortium name="US DOE Joint Genome Institute"/>
            <person name="Copeland A."/>
            <person name="Lucas S."/>
            <person name="Lapidus A."/>
            <person name="Barry K."/>
            <person name="Detter J.C."/>
            <person name="Glavina del Rio T."/>
            <person name="Hammon N."/>
            <person name="Israni S."/>
            <person name="Dalin E."/>
            <person name="Tice H."/>
            <person name="Pitluck S."/>
            <person name="Brettin T."/>
            <person name="Bruce D."/>
            <person name="Han C."/>
            <person name="Tapia R."/>
            <person name="Goodwin L."/>
            <person name="Thompson L.S."/>
            <person name="Gilna P."/>
            <person name="Schmutz J."/>
            <person name="Larimer F."/>
            <person name="Land M."/>
            <person name="Hauser L."/>
            <person name="Kyrpides N."/>
            <person name="Kim E."/>
            <person name="Belas R."/>
            <person name="Moran M.A."/>
            <person name="Buchan A."/>
            <person name="Gonzalez J.M."/>
            <person name="Schell M.A."/>
            <person name="Sun F."/>
            <person name="Richardson P."/>
        </authorList>
    </citation>
    <scope>NUCLEOTIDE SEQUENCE [LARGE SCALE GENOMIC DNA]</scope>
    <source>
        <strain>TM1040</strain>
    </source>
</reference>
<dbReference type="EC" id="3.6.1.27" evidence="1"/>
<dbReference type="EMBL" id="CP000377">
    <property type="protein sequence ID" value="ABF65553.1"/>
    <property type="molecule type" value="Genomic_DNA"/>
</dbReference>
<dbReference type="RefSeq" id="WP_011540135.1">
    <property type="nucleotide sequence ID" value="NC_008044.1"/>
</dbReference>
<dbReference type="SMR" id="Q1GCR3"/>
<dbReference type="STRING" id="292414.TM1040_2821"/>
<dbReference type="KEGG" id="sit:TM1040_2821"/>
<dbReference type="eggNOG" id="COG1968">
    <property type="taxonomic scope" value="Bacteria"/>
</dbReference>
<dbReference type="HOGENOM" id="CLU_060296_1_0_5"/>
<dbReference type="OrthoDB" id="9808289at2"/>
<dbReference type="Proteomes" id="UP000000636">
    <property type="component" value="Chromosome"/>
</dbReference>
<dbReference type="GO" id="GO:0005886">
    <property type="term" value="C:plasma membrane"/>
    <property type="evidence" value="ECO:0007669"/>
    <property type="project" value="UniProtKB-SubCell"/>
</dbReference>
<dbReference type="GO" id="GO:0050380">
    <property type="term" value="F:undecaprenyl-diphosphatase activity"/>
    <property type="evidence" value="ECO:0007669"/>
    <property type="project" value="UniProtKB-UniRule"/>
</dbReference>
<dbReference type="GO" id="GO:0071555">
    <property type="term" value="P:cell wall organization"/>
    <property type="evidence" value="ECO:0007669"/>
    <property type="project" value="UniProtKB-KW"/>
</dbReference>
<dbReference type="GO" id="GO:0009252">
    <property type="term" value="P:peptidoglycan biosynthetic process"/>
    <property type="evidence" value="ECO:0007669"/>
    <property type="project" value="UniProtKB-KW"/>
</dbReference>
<dbReference type="GO" id="GO:0008360">
    <property type="term" value="P:regulation of cell shape"/>
    <property type="evidence" value="ECO:0007669"/>
    <property type="project" value="UniProtKB-KW"/>
</dbReference>
<dbReference type="GO" id="GO:0046677">
    <property type="term" value="P:response to antibiotic"/>
    <property type="evidence" value="ECO:0007669"/>
    <property type="project" value="UniProtKB-UniRule"/>
</dbReference>
<dbReference type="HAMAP" id="MF_01006">
    <property type="entry name" value="Undec_diphosphatase"/>
    <property type="match status" value="1"/>
</dbReference>
<dbReference type="InterPro" id="IPR003824">
    <property type="entry name" value="UppP"/>
</dbReference>
<dbReference type="NCBIfam" id="NF001393">
    <property type="entry name" value="PRK00281.2-4"/>
    <property type="match status" value="1"/>
</dbReference>
<dbReference type="PANTHER" id="PTHR30622">
    <property type="entry name" value="UNDECAPRENYL-DIPHOSPHATASE"/>
    <property type="match status" value="1"/>
</dbReference>
<dbReference type="PANTHER" id="PTHR30622:SF4">
    <property type="entry name" value="UNDECAPRENYL-DIPHOSPHATASE"/>
    <property type="match status" value="1"/>
</dbReference>
<dbReference type="Pfam" id="PF02673">
    <property type="entry name" value="BacA"/>
    <property type="match status" value="1"/>
</dbReference>
<keyword id="KW-0046">Antibiotic resistance</keyword>
<keyword id="KW-0997">Cell inner membrane</keyword>
<keyword id="KW-1003">Cell membrane</keyword>
<keyword id="KW-0133">Cell shape</keyword>
<keyword id="KW-0961">Cell wall biogenesis/degradation</keyword>
<keyword id="KW-0378">Hydrolase</keyword>
<keyword id="KW-0472">Membrane</keyword>
<keyword id="KW-0573">Peptidoglycan synthesis</keyword>
<keyword id="KW-1185">Reference proteome</keyword>
<keyword id="KW-0812">Transmembrane</keyword>
<keyword id="KW-1133">Transmembrane helix</keyword>
<organism>
    <name type="scientific">Ruegeria sp. (strain TM1040)</name>
    <name type="common">Silicibacter sp.</name>
    <dbReference type="NCBI Taxonomy" id="292414"/>
    <lineage>
        <taxon>Bacteria</taxon>
        <taxon>Pseudomonadati</taxon>
        <taxon>Pseudomonadota</taxon>
        <taxon>Alphaproteobacteria</taxon>
        <taxon>Rhodobacterales</taxon>
        <taxon>Roseobacteraceae</taxon>
        <taxon>Ruegeria</taxon>
    </lineage>
</organism>
<accession>Q1GCR3</accession>
<feature type="chain" id="PRO_0000250264" description="Undecaprenyl-diphosphatase">
    <location>
        <begin position="1"/>
        <end position="267"/>
    </location>
</feature>
<feature type="transmembrane region" description="Helical" evidence="1">
    <location>
        <begin position="1"/>
        <end position="21"/>
    </location>
</feature>
<feature type="transmembrane region" description="Helical" evidence="1">
    <location>
        <begin position="40"/>
        <end position="60"/>
    </location>
</feature>
<feature type="transmembrane region" description="Helical" evidence="1">
    <location>
        <begin position="85"/>
        <end position="105"/>
    </location>
</feature>
<feature type="transmembrane region" description="Helical" evidence="1">
    <location>
        <begin position="112"/>
        <end position="132"/>
    </location>
</feature>
<feature type="transmembrane region" description="Helical" evidence="1">
    <location>
        <begin position="188"/>
        <end position="208"/>
    </location>
</feature>
<feature type="transmembrane region" description="Helical" evidence="1">
    <location>
        <begin position="219"/>
        <end position="239"/>
    </location>
</feature>
<feature type="transmembrane region" description="Helical" evidence="1">
    <location>
        <begin position="245"/>
        <end position="265"/>
    </location>
</feature>
<comment type="function">
    <text evidence="1">Catalyzes the dephosphorylation of undecaprenyl diphosphate (UPP). Confers resistance to bacitracin.</text>
</comment>
<comment type="catalytic activity">
    <reaction evidence="1">
        <text>di-trans,octa-cis-undecaprenyl diphosphate + H2O = di-trans,octa-cis-undecaprenyl phosphate + phosphate + H(+)</text>
        <dbReference type="Rhea" id="RHEA:28094"/>
        <dbReference type="ChEBI" id="CHEBI:15377"/>
        <dbReference type="ChEBI" id="CHEBI:15378"/>
        <dbReference type="ChEBI" id="CHEBI:43474"/>
        <dbReference type="ChEBI" id="CHEBI:58405"/>
        <dbReference type="ChEBI" id="CHEBI:60392"/>
        <dbReference type="EC" id="3.6.1.27"/>
    </reaction>
</comment>
<comment type="subcellular location">
    <subcellularLocation>
        <location evidence="1">Cell inner membrane</location>
        <topology evidence="1">Multi-pass membrane protein</topology>
    </subcellularLocation>
</comment>
<comment type="miscellaneous">
    <text>Bacitracin is thought to be involved in the inhibition of peptidoglycan synthesis by sequestering undecaprenyl diphosphate, thereby reducing the pool of lipid carrier available.</text>
</comment>
<comment type="similarity">
    <text evidence="1">Belongs to the UppP family.</text>
</comment>
<protein>
    <recommendedName>
        <fullName evidence="1">Undecaprenyl-diphosphatase</fullName>
        <ecNumber evidence="1">3.6.1.27</ecNumber>
    </recommendedName>
    <alternativeName>
        <fullName evidence="1">Bacitracin resistance protein</fullName>
    </alternativeName>
    <alternativeName>
        <fullName evidence="1">Undecaprenyl pyrophosphate phosphatase</fullName>
    </alternativeName>
</protein>
<proteinExistence type="inferred from homology"/>
<sequence length="267" mass="28439">MPLLQLILVALIQGVTEFLPVSSSGHLILLPRLTGLEDQGQAIDVAVHVGTLAAVVLFFWRDVRAGLIGLPRALIGRLDTKGARLALGLIVATIPTVIFGTFLYFTGLSESLRSVAVIGWTMLVFGVVLYIADQRGPIDKSASDWGVRDAVIMGLWQMLALIPGTSRSGITITGARSLGYNREDGARIAMLMSIPTIIASGVLLGTEVALDADVDLMRDMGIAALLAMASALAALALMMRLLRSVSFTPYVIYRVALGMVLLFIAYG</sequence>
<name>UPPP_RUEST</name>
<evidence type="ECO:0000255" key="1">
    <source>
        <dbReference type="HAMAP-Rule" id="MF_01006"/>
    </source>
</evidence>
<gene>
    <name evidence="1" type="primary">uppP</name>
    <name type="ordered locus">TM1040_2821</name>
</gene>